<protein>
    <recommendedName>
        <fullName evidence="1">Small ribosomal subunit protein uS14</fullName>
    </recommendedName>
    <alternativeName>
        <fullName evidence="2">30S ribosomal protein S14 type Z</fullName>
    </alternativeName>
</protein>
<feature type="chain" id="PRO_1000067938" description="Small ribosomal subunit protein uS14">
    <location>
        <begin position="1"/>
        <end position="61"/>
    </location>
</feature>
<feature type="binding site" evidence="1">
    <location>
        <position position="24"/>
    </location>
    <ligand>
        <name>Zn(2+)</name>
        <dbReference type="ChEBI" id="CHEBI:29105"/>
    </ligand>
</feature>
<feature type="binding site" evidence="1">
    <location>
        <position position="27"/>
    </location>
    <ligand>
        <name>Zn(2+)</name>
        <dbReference type="ChEBI" id="CHEBI:29105"/>
    </ligand>
</feature>
<feature type="binding site" evidence="1">
    <location>
        <position position="40"/>
    </location>
    <ligand>
        <name>Zn(2+)</name>
        <dbReference type="ChEBI" id="CHEBI:29105"/>
    </ligand>
</feature>
<feature type="binding site" evidence="1">
    <location>
        <position position="43"/>
    </location>
    <ligand>
        <name>Zn(2+)</name>
        <dbReference type="ChEBI" id="CHEBI:29105"/>
    </ligand>
</feature>
<name>RS14Z_ACET2</name>
<gene>
    <name evidence="1" type="primary">rpsZ</name>
    <name evidence="1" type="synonym">rpsN</name>
    <name type="ordered locus">Cthe_2916</name>
</gene>
<sequence>MAKKSLIVKQQRKPKYRTRAYNRCKLCGRPHAYMRKFGICRLCFRDLAYKGQIPGVRKASW</sequence>
<proteinExistence type="inferred from homology"/>
<reference key="1">
    <citation type="submission" date="2007-02" db="EMBL/GenBank/DDBJ databases">
        <title>Complete sequence of Clostridium thermocellum ATCC 27405.</title>
        <authorList>
            <consortium name="US DOE Joint Genome Institute"/>
            <person name="Copeland A."/>
            <person name="Lucas S."/>
            <person name="Lapidus A."/>
            <person name="Barry K."/>
            <person name="Detter J.C."/>
            <person name="Glavina del Rio T."/>
            <person name="Hammon N."/>
            <person name="Israni S."/>
            <person name="Dalin E."/>
            <person name="Tice H."/>
            <person name="Pitluck S."/>
            <person name="Chertkov O."/>
            <person name="Brettin T."/>
            <person name="Bruce D."/>
            <person name="Han C."/>
            <person name="Tapia R."/>
            <person name="Gilna P."/>
            <person name="Schmutz J."/>
            <person name="Larimer F."/>
            <person name="Land M."/>
            <person name="Hauser L."/>
            <person name="Kyrpides N."/>
            <person name="Mikhailova N."/>
            <person name="Wu J.H.D."/>
            <person name="Newcomb M."/>
            <person name="Richardson P."/>
        </authorList>
    </citation>
    <scope>NUCLEOTIDE SEQUENCE [LARGE SCALE GENOMIC DNA]</scope>
    <source>
        <strain>ATCC 27405 / DSM 1237 / JCM 9322 / NBRC 103400 / NCIMB 10682 / NRRL B-4536 / VPI 7372</strain>
    </source>
</reference>
<accession>A3DJI5</accession>
<evidence type="ECO:0000255" key="1">
    <source>
        <dbReference type="HAMAP-Rule" id="MF_01364"/>
    </source>
</evidence>
<evidence type="ECO:0000305" key="2"/>
<dbReference type="EMBL" id="CP000568">
    <property type="protein sequence ID" value="ABN54114.1"/>
    <property type="molecule type" value="Genomic_DNA"/>
</dbReference>
<dbReference type="RefSeq" id="WP_003514649.1">
    <property type="nucleotide sequence ID" value="NC_009012.1"/>
</dbReference>
<dbReference type="SMR" id="A3DJI5"/>
<dbReference type="STRING" id="203119.Cthe_2916"/>
<dbReference type="GeneID" id="35805122"/>
<dbReference type="KEGG" id="cth:Cthe_2916"/>
<dbReference type="eggNOG" id="COG0199">
    <property type="taxonomic scope" value="Bacteria"/>
</dbReference>
<dbReference type="HOGENOM" id="CLU_139869_3_0_9"/>
<dbReference type="OrthoDB" id="9810484at2"/>
<dbReference type="Proteomes" id="UP000002145">
    <property type="component" value="Chromosome"/>
</dbReference>
<dbReference type="GO" id="GO:0005737">
    <property type="term" value="C:cytoplasm"/>
    <property type="evidence" value="ECO:0007669"/>
    <property type="project" value="UniProtKB-ARBA"/>
</dbReference>
<dbReference type="GO" id="GO:0015935">
    <property type="term" value="C:small ribosomal subunit"/>
    <property type="evidence" value="ECO:0007669"/>
    <property type="project" value="TreeGrafter"/>
</dbReference>
<dbReference type="GO" id="GO:0019843">
    <property type="term" value="F:rRNA binding"/>
    <property type="evidence" value="ECO:0007669"/>
    <property type="project" value="UniProtKB-UniRule"/>
</dbReference>
<dbReference type="GO" id="GO:0003735">
    <property type="term" value="F:structural constituent of ribosome"/>
    <property type="evidence" value="ECO:0007669"/>
    <property type="project" value="InterPro"/>
</dbReference>
<dbReference type="GO" id="GO:0008270">
    <property type="term" value="F:zinc ion binding"/>
    <property type="evidence" value="ECO:0007669"/>
    <property type="project" value="UniProtKB-UniRule"/>
</dbReference>
<dbReference type="GO" id="GO:0006412">
    <property type="term" value="P:translation"/>
    <property type="evidence" value="ECO:0007669"/>
    <property type="project" value="UniProtKB-UniRule"/>
</dbReference>
<dbReference type="FunFam" id="4.10.830.10:FF:000001">
    <property type="entry name" value="30S ribosomal protein S14 type Z"/>
    <property type="match status" value="1"/>
</dbReference>
<dbReference type="Gene3D" id="4.10.830.10">
    <property type="entry name" value="30s Ribosomal Protein S14, Chain N"/>
    <property type="match status" value="1"/>
</dbReference>
<dbReference type="HAMAP" id="MF_01364_B">
    <property type="entry name" value="Ribosomal_uS14_2_B"/>
    <property type="match status" value="1"/>
</dbReference>
<dbReference type="InterPro" id="IPR001209">
    <property type="entry name" value="Ribosomal_uS14"/>
</dbReference>
<dbReference type="InterPro" id="IPR023053">
    <property type="entry name" value="Ribosomal_uS14_bact"/>
</dbReference>
<dbReference type="InterPro" id="IPR018271">
    <property type="entry name" value="Ribosomal_uS14_CS"/>
</dbReference>
<dbReference type="InterPro" id="IPR043140">
    <property type="entry name" value="Ribosomal_uS14_sf"/>
</dbReference>
<dbReference type="NCBIfam" id="NF005974">
    <property type="entry name" value="PRK08061.1"/>
    <property type="match status" value="1"/>
</dbReference>
<dbReference type="PANTHER" id="PTHR19836">
    <property type="entry name" value="30S RIBOSOMAL PROTEIN S14"/>
    <property type="match status" value="1"/>
</dbReference>
<dbReference type="PANTHER" id="PTHR19836:SF19">
    <property type="entry name" value="SMALL RIBOSOMAL SUBUNIT PROTEIN US14M"/>
    <property type="match status" value="1"/>
</dbReference>
<dbReference type="Pfam" id="PF00253">
    <property type="entry name" value="Ribosomal_S14"/>
    <property type="match status" value="1"/>
</dbReference>
<dbReference type="SUPFAM" id="SSF57716">
    <property type="entry name" value="Glucocorticoid receptor-like (DNA-binding domain)"/>
    <property type="match status" value="1"/>
</dbReference>
<dbReference type="PROSITE" id="PS00527">
    <property type="entry name" value="RIBOSOMAL_S14"/>
    <property type="match status" value="1"/>
</dbReference>
<organism>
    <name type="scientific">Acetivibrio thermocellus (strain ATCC 27405 / DSM 1237 / JCM 9322 / NBRC 103400 / NCIMB 10682 / NRRL B-4536 / VPI 7372)</name>
    <name type="common">Clostridium thermocellum</name>
    <dbReference type="NCBI Taxonomy" id="203119"/>
    <lineage>
        <taxon>Bacteria</taxon>
        <taxon>Bacillati</taxon>
        <taxon>Bacillota</taxon>
        <taxon>Clostridia</taxon>
        <taxon>Eubacteriales</taxon>
        <taxon>Oscillospiraceae</taxon>
        <taxon>Acetivibrio</taxon>
    </lineage>
</organism>
<comment type="function">
    <text evidence="1">Binds 16S rRNA, required for the assembly of 30S particles and may also be responsible for determining the conformation of the 16S rRNA at the A site.</text>
</comment>
<comment type="cofactor">
    <cofactor evidence="1">
        <name>Zn(2+)</name>
        <dbReference type="ChEBI" id="CHEBI:29105"/>
    </cofactor>
    <text evidence="1">Binds 1 zinc ion per subunit.</text>
</comment>
<comment type="subunit">
    <text evidence="1">Part of the 30S ribosomal subunit. Contacts proteins S3 and S10.</text>
</comment>
<comment type="similarity">
    <text evidence="1">Belongs to the universal ribosomal protein uS14 family. Zinc-binding uS14 subfamily.</text>
</comment>
<keyword id="KW-0479">Metal-binding</keyword>
<keyword id="KW-1185">Reference proteome</keyword>
<keyword id="KW-0687">Ribonucleoprotein</keyword>
<keyword id="KW-0689">Ribosomal protein</keyword>
<keyword id="KW-0694">RNA-binding</keyword>
<keyword id="KW-0699">rRNA-binding</keyword>
<keyword id="KW-0862">Zinc</keyword>